<feature type="chain" id="PRO_1000054693" description="Large ribosomal subunit protein uL16">
    <location>
        <begin position="1"/>
        <end position="136"/>
    </location>
</feature>
<protein>
    <recommendedName>
        <fullName evidence="1">Large ribosomal subunit protein uL16</fullName>
    </recommendedName>
    <alternativeName>
        <fullName evidence="2">50S ribosomal protein L16</fullName>
    </alternativeName>
</protein>
<organism>
    <name type="scientific">Rickettsia canadensis (strain McKiel)</name>
    <dbReference type="NCBI Taxonomy" id="293613"/>
    <lineage>
        <taxon>Bacteria</taxon>
        <taxon>Pseudomonadati</taxon>
        <taxon>Pseudomonadota</taxon>
        <taxon>Alphaproteobacteria</taxon>
        <taxon>Rickettsiales</taxon>
        <taxon>Rickettsiaceae</taxon>
        <taxon>Rickettsieae</taxon>
        <taxon>Rickettsia</taxon>
        <taxon>belli group</taxon>
    </lineage>
</organism>
<sequence>MLAPKKQRFRKAHKGRVVSKAKAGTTLAFGSFGLKSIDSWRVTARQIEAGRKAATRCMKRQGRLWIRIFPDVPVSKKPAEVRMGKGKGSPEFFAVRVAPGRIMFEIAGVEENIAIRALELASTKLPVRTRIVRRYE</sequence>
<keyword id="KW-0687">Ribonucleoprotein</keyword>
<keyword id="KW-0689">Ribosomal protein</keyword>
<keyword id="KW-0694">RNA-binding</keyword>
<keyword id="KW-0699">rRNA-binding</keyword>
<keyword id="KW-0820">tRNA-binding</keyword>
<proteinExistence type="inferred from homology"/>
<dbReference type="EMBL" id="CP000409">
    <property type="protein sequence ID" value="ABV73792.1"/>
    <property type="molecule type" value="Genomic_DNA"/>
</dbReference>
<dbReference type="RefSeq" id="WP_012148987.1">
    <property type="nucleotide sequence ID" value="NC_009879.1"/>
</dbReference>
<dbReference type="SMR" id="A8EZK9"/>
<dbReference type="STRING" id="293613.A1E_04335"/>
<dbReference type="KEGG" id="rcm:A1E_04335"/>
<dbReference type="eggNOG" id="COG0197">
    <property type="taxonomic scope" value="Bacteria"/>
</dbReference>
<dbReference type="HOGENOM" id="CLU_078858_2_1_5"/>
<dbReference type="Proteomes" id="UP000007056">
    <property type="component" value="Chromosome"/>
</dbReference>
<dbReference type="GO" id="GO:0022625">
    <property type="term" value="C:cytosolic large ribosomal subunit"/>
    <property type="evidence" value="ECO:0007669"/>
    <property type="project" value="TreeGrafter"/>
</dbReference>
<dbReference type="GO" id="GO:0019843">
    <property type="term" value="F:rRNA binding"/>
    <property type="evidence" value="ECO:0007669"/>
    <property type="project" value="UniProtKB-UniRule"/>
</dbReference>
<dbReference type="GO" id="GO:0003735">
    <property type="term" value="F:structural constituent of ribosome"/>
    <property type="evidence" value="ECO:0007669"/>
    <property type="project" value="InterPro"/>
</dbReference>
<dbReference type="GO" id="GO:0000049">
    <property type="term" value="F:tRNA binding"/>
    <property type="evidence" value="ECO:0007669"/>
    <property type="project" value="UniProtKB-KW"/>
</dbReference>
<dbReference type="GO" id="GO:0006412">
    <property type="term" value="P:translation"/>
    <property type="evidence" value="ECO:0007669"/>
    <property type="project" value="UniProtKB-UniRule"/>
</dbReference>
<dbReference type="CDD" id="cd01433">
    <property type="entry name" value="Ribosomal_L16_L10e"/>
    <property type="match status" value="1"/>
</dbReference>
<dbReference type="FunFam" id="3.90.1170.10:FF:000001">
    <property type="entry name" value="50S ribosomal protein L16"/>
    <property type="match status" value="1"/>
</dbReference>
<dbReference type="Gene3D" id="3.90.1170.10">
    <property type="entry name" value="Ribosomal protein L10e/L16"/>
    <property type="match status" value="1"/>
</dbReference>
<dbReference type="HAMAP" id="MF_01342">
    <property type="entry name" value="Ribosomal_uL16"/>
    <property type="match status" value="1"/>
</dbReference>
<dbReference type="InterPro" id="IPR047873">
    <property type="entry name" value="Ribosomal_uL16"/>
</dbReference>
<dbReference type="InterPro" id="IPR000114">
    <property type="entry name" value="Ribosomal_uL16_bact-type"/>
</dbReference>
<dbReference type="InterPro" id="IPR020798">
    <property type="entry name" value="Ribosomal_uL16_CS"/>
</dbReference>
<dbReference type="InterPro" id="IPR016180">
    <property type="entry name" value="Ribosomal_uL16_dom"/>
</dbReference>
<dbReference type="InterPro" id="IPR036920">
    <property type="entry name" value="Ribosomal_uL16_sf"/>
</dbReference>
<dbReference type="NCBIfam" id="TIGR01164">
    <property type="entry name" value="rplP_bact"/>
    <property type="match status" value="1"/>
</dbReference>
<dbReference type="PANTHER" id="PTHR12220">
    <property type="entry name" value="50S/60S RIBOSOMAL PROTEIN L16"/>
    <property type="match status" value="1"/>
</dbReference>
<dbReference type="PANTHER" id="PTHR12220:SF13">
    <property type="entry name" value="LARGE RIBOSOMAL SUBUNIT PROTEIN UL16M"/>
    <property type="match status" value="1"/>
</dbReference>
<dbReference type="Pfam" id="PF00252">
    <property type="entry name" value="Ribosomal_L16"/>
    <property type="match status" value="1"/>
</dbReference>
<dbReference type="PRINTS" id="PR00060">
    <property type="entry name" value="RIBOSOMALL16"/>
</dbReference>
<dbReference type="SUPFAM" id="SSF54686">
    <property type="entry name" value="Ribosomal protein L16p/L10e"/>
    <property type="match status" value="1"/>
</dbReference>
<dbReference type="PROSITE" id="PS00586">
    <property type="entry name" value="RIBOSOMAL_L16_1"/>
    <property type="match status" value="1"/>
</dbReference>
<dbReference type="PROSITE" id="PS00701">
    <property type="entry name" value="RIBOSOMAL_L16_2"/>
    <property type="match status" value="1"/>
</dbReference>
<accession>A8EZK9</accession>
<comment type="function">
    <text evidence="1">Binds 23S rRNA and is also seen to make contacts with the A and possibly P site tRNAs.</text>
</comment>
<comment type="subunit">
    <text evidence="1">Part of the 50S ribosomal subunit.</text>
</comment>
<comment type="similarity">
    <text evidence="1">Belongs to the universal ribosomal protein uL16 family.</text>
</comment>
<evidence type="ECO:0000255" key="1">
    <source>
        <dbReference type="HAMAP-Rule" id="MF_01342"/>
    </source>
</evidence>
<evidence type="ECO:0000305" key="2"/>
<name>RL16_RICCK</name>
<gene>
    <name evidence="1" type="primary">rplP</name>
    <name type="ordered locus">A1E_04335</name>
</gene>
<reference key="1">
    <citation type="submission" date="2007-09" db="EMBL/GenBank/DDBJ databases">
        <title>Complete genome sequence of Rickettsia canadensis.</title>
        <authorList>
            <person name="Madan A."/>
            <person name="Fahey J."/>
            <person name="Helton E."/>
            <person name="Ketteman M."/>
            <person name="Madan A."/>
            <person name="Rodrigues S."/>
            <person name="Sanchez A."/>
            <person name="Whiting M."/>
            <person name="Dasch G."/>
            <person name="Eremeeva M."/>
        </authorList>
    </citation>
    <scope>NUCLEOTIDE SEQUENCE [LARGE SCALE GENOMIC DNA]</scope>
    <source>
        <strain>McKiel</strain>
    </source>
</reference>